<reference key="1">
    <citation type="journal article" date="2002" name="J. Bacteriol.">
        <title>Genome sequence and analysis of the oral bacterium Fusobacterium nucleatum strain ATCC 25586.</title>
        <authorList>
            <person name="Kapatral V."/>
            <person name="Anderson I."/>
            <person name="Ivanova N."/>
            <person name="Reznik G."/>
            <person name="Los T."/>
            <person name="Lykidis A."/>
            <person name="Bhattacharyya A."/>
            <person name="Bartman A."/>
            <person name="Gardner W."/>
            <person name="Grechkin G."/>
            <person name="Zhu L."/>
            <person name="Vasieva O."/>
            <person name="Chu L."/>
            <person name="Kogan Y."/>
            <person name="Chaga O."/>
            <person name="Goltsman E."/>
            <person name="Bernal A."/>
            <person name="Larsen N."/>
            <person name="D'Souza M."/>
            <person name="Walunas T."/>
            <person name="Pusch G."/>
            <person name="Haselkorn R."/>
            <person name="Fonstein M."/>
            <person name="Kyrpides N.C."/>
            <person name="Overbeek R."/>
        </authorList>
    </citation>
    <scope>NUCLEOTIDE SEQUENCE [LARGE SCALE GENOMIC DNA]</scope>
    <source>
        <strain>ATCC 25586 / DSM 15643 / BCRC 10681 / CIP 101130 / JCM 8532 / KCTC 2640 / LMG 13131 / VPI 4355</strain>
    </source>
</reference>
<accession>Q8REV6</accession>
<gene>
    <name evidence="1" type="primary">purH</name>
    <name type="ordered locus">FN0982</name>
</gene>
<feature type="chain" id="PRO_0000192094" description="Bifunctional purine biosynthesis protein PurH">
    <location>
        <begin position="1"/>
        <end position="504"/>
    </location>
</feature>
<feature type="domain" description="MGS-like" evidence="2">
    <location>
        <begin position="1"/>
        <end position="144"/>
    </location>
</feature>
<comment type="catalytic activity">
    <reaction evidence="1">
        <text>(6R)-10-formyltetrahydrofolate + 5-amino-1-(5-phospho-beta-D-ribosyl)imidazole-4-carboxamide = 5-formamido-1-(5-phospho-D-ribosyl)imidazole-4-carboxamide + (6S)-5,6,7,8-tetrahydrofolate</text>
        <dbReference type="Rhea" id="RHEA:22192"/>
        <dbReference type="ChEBI" id="CHEBI:57453"/>
        <dbReference type="ChEBI" id="CHEBI:58467"/>
        <dbReference type="ChEBI" id="CHEBI:58475"/>
        <dbReference type="ChEBI" id="CHEBI:195366"/>
        <dbReference type="EC" id="2.1.2.3"/>
    </reaction>
</comment>
<comment type="catalytic activity">
    <reaction evidence="1">
        <text>IMP + H2O = 5-formamido-1-(5-phospho-D-ribosyl)imidazole-4-carboxamide</text>
        <dbReference type="Rhea" id="RHEA:18445"/>
        <dbReference type="ChEBI" id="CHEBI:15377"/>
        <dbReference type="ChEBI" id="CHEBI:58053"/>
        <dbReference type="ChEBI" id="CHEBI:58467"/>
        <dbReference type="EC" id="3.5.4.10"/>
    </reaction>
</comment>
<comment type="pathway">
    <text evidence="1">Purine metabolism; IMP biosynthesis via de novo pathway; 5-formamido-1-(5-phospho-D-ribosyl)imidazole-4-carboxamide from 5-amino-1-(5-phospho-D-ribosyl)imidazole-4-carboxamide (10-formyl THF route): step 1/1.</text>
</comment>
<comment type="pathway">
    <text evidence="1">Purine metabolism; IMP biosynthesis via de novo pathway; IMP from 5-formamido-1-(5-phospho-D-ribosyl)imidazole-4-carboxamide: step 1/1.</text>
</comment>
<comment type="domain">
    <text evidence="1">The IMP cyclohydrolase activity resides in the N-terminal region.</text>
</comment>
<comment type="similarity">
    <text evidence="1">Belongs to the PurH family.</text>
</comment>
<name>PUR9_FUSNN</name>
<protein>
    <recommendedName>
        <fullName evidence="1">Bifunctional purine biosynthesis protein PurH</fullName>
    </recommendedName>
    <domain>
        <recommendedName>
            <fullName evidence="1">Phosphoribosylaminoimidazolecarboxamide formyltransferase</fullName>
            <ecNumber evidence="1">2.1.2.3</ecNumber>
        </recommendedName>
        <alternativeName>
            <fullName evidence="1">AICAR transformylase</fullName>
        </alternativeName>
    </domain>
    <domain>
        <recommendedName>
            <fullName evidence="1">IMP cyclohydrolase</fullName>
            <ecNumber evidence="1">3.5.4.10</ecNumber>
        </recommendedName>
        <alternativeName>
            <fullName evidence="1">ATIC</fullName>
        </alternativeName>
        <alternativeName>
            <fullName evidence="1">IMP synthase</fullName>
        </alternativeName>
        <alternativeName>
            <fullName evidence="1">Inosinicase</fullName>
        </alternativeName>
    </domain>
</protein>
<sequence length="504" mass="56927">MRKRALISVYDKTGILDFAKFLVSKGIEIISTGGTYKYLKENNIEVIEVSKITNFEEMLDGRVKTLHPNIHGGILALRDNEEHMRTLKERNIDTIDYVIVNLYPFFEKVKEDLSFEEKIEFIDIGGPTMLRSAAKSFKNVVVISDVKDYESIKEEINKSDDVSYEARKKLAGKVFNLTSAYDAAISQFLLDEDFSEYLNISYKKFMEMRYGENSHQKAAYYTDNMTDGAMKDFKQLNGKELSYNNIRDMDLAWKVVSEFDEICCCAVKHSTPCGVALGDNVEGAYKKAYETDPVSIFGGIVAFNREVDEATAKLLNEIFLEIIIAPSFSKAALEILTKKKNIRLIECKNKPSDKKELIKVDGGILIQDTNNKLYEDLEVVTKAKPTSQEEKDLIFALKVVKFVKSNAIVVAKNLQTLGIGGGEVSRIWAAEKALERAKERFNATDVVLSSDAFFPFKDVIELAAKNGVKAIIQPSGSVNDKDSIEECDRNNISMIFSKLRHFKH</sequence>
<dbReference type="EC" id="2.1.2.3" evidence="1"/>
<dbReference type="EC" id="3.5.4.10" evidence="1"/>
<dbReference type="EMBL" id="AE009951">
    <property type="protein sequence ID" value="AAL95178.1"/>
    <property type="molecule type" value="Genomic_DNA"/>
</dbReference>
<dbReference type="RefSeq" id="NP_603879.1">
    <property type="nucleotide sequence ID" value="NC_003454.1"/>
</dbReference>
<dbReference type="RefSeq" id="WP_011016803.1">
    <property type="nucleotide sequence ID" value="NZ_OZ209243.1"/>
</dbReference>
<dbReference type="SMR" id="Q8REV6"/>
<dbReference type="FunCoup" id="Q8REV6">
    <property type="interactions" value="343"/>
</dbReference>
<dbReference type="STRING" id="190304.FN0982"/>
<dbReference type="PaxDb" id="190304-FN0982"/>
<dbReference type="EnsemblBacteria" id="AAL95178">
    <property type="protein sequence ID" value="AAL95178"/>
    <property type="gene ID" value="FN0982"/>
</dbReference>
<dbReference type="GeneID" id="79783965"/>
<dbReference type="KEGG" id="fnu:FN0982"/>
<dbReference type="PATRIC" id="fig|190304.8.peg.1547"/>
<dbReference type="eggNOG" id="COG0138">
    <property type="taxonomic scope" value="Bacteria"/>
</dbReference>
<dbReference type="HOGENOM" id="CLU_016316_5_2_0"/>
<dbReference type="InParanoid" id="Q8REV6"/>
<dbReference type="BioCyc" id="FNUC190304:G1FZS-1564-MONOMER"/>
<dbReference type="UniPathway" id="UPA00074">
    <property type="reaction ID" value="UER00133"/>
</dbReference>
<dbReference type="UniPathway" id="UPA00074">
    <property type="reaction ID" value="UER00135"/>
</dbReference>
<dbReference type="Proteomes" id="UP000002521">
    <property type="component" value="Chromosome"/>
</dbReference>
<dbReference type="GO" id="GO:0005829">
    <property type="term" value="C:cytosol"/>
    <property type="evidence" value="ECO:0000318"/>
    <property type="project" value="GO_Central"/>
</dbReference>
<dbReference type="GO" id="GO:0003937">
    <property type="term" value="F:IMP cyclohydrolase activity"/>
    <property type="evidence" value="ECO:0000318"/>
    <property type="project" value="GO_Central"/>
</dbReference>
<dbReference type="GO" id="GO:0004643">
    <property type="term" value="F:phosphoribosylaminoimidazolecarboxamide formyltransferase activity"/>
    <property type="evidence" value="ECO:0000318"/>
    <property type="project" value="GO_Central"/>
</dbReference>
<dbReference type="GO" id="GO:0006189">
    <property type="term" value="P:'de novo' IMP biosynthetic process"/>
    <property type="evidence" value="ECO:0000318"/>
    <property type="project" value="GO_Central"/>
</dbReference>
<dbReference type="CDD" id="cd01421">
    <property type="entry name" value="IMPCH"/>
    <property type="match status" value="1"/>
</dbReference>
<dbReference type="FunFam" id="3.40.140.20:FF:000001">
    <property type="entry name" value="Bifunctional purine biosynthesis protein PurH"/>
    <property type="match status" value="1"/>
</dbReference>
<dbReference type="FunFam" id="3.40.140.20:FF:000002">
    <property type="entry name" value="Bifunctional purine biosynthesis protein PurH"/>
    <property type="match status" value="1"/>
</dbReference>
<dbReference type="FunFam" id="3.40.50.1380:FF:000001">
    <property type="entry name" value="Bifunctional purine biosynthesis protein PurH"/>
    <property type="match status" value="1"/>
</dbReference>
<dbReference type="Gene3D" id="3.40.140.20">
    <property type="match status" value="2"/>
</dbReference>
<dbReference type="Gene3D" id="3.40.50.1380">
    <property type="entry name" value="Methylglyoxal synthase-like domain"/>
    <property type="match status" value="1"/>
</dbReference>
<dbReference type="HAMAP" id="MF_00139">
    <property type="entry name" value="PurH"/>
    <property type="match status" value="1"/>
</dbReference>
<dbReference type="InterPro" id="IPR024051">
    <property type="entry name" value="AICAR_Tfase_dup_dom_sf"/>
</dbReference>
<dbReference type="InterPro" id="IPR016193">
    <property type="entry name" value="Cytidine_deaminase-like"/>
</dbReference>
<dbReference type="InterPro" id="IPR011607">
    <property type="entry name" value="MGS-like_dom"/>
</dbReference>
<dbReference type="InterPro" id="IPR036914">
    <property type="entry name" value="MGS-like_dom_sf"/>
</dbReference>
<dbReference type="InterPro" id="IPR002695">
    <property type="entry name" value="PurH-like"/>
</dbReference>
<dbReference type="NCBIfam" id="NF002049">
    <property type="entry name" value="PRK00881.1"/>
    <property type="match status" value="1"/>
</dbReference>
<dbReference type="NCBIfam" id="TIGR00355">
    <property type="entry name" value="purH"/>
    <property type="match status" value="1"/>
</dbReference>
<dbReference type="PANTHER" id="PTHR11692:SF0">
    <property type="entry name" value="BIFUNCTIONAL PURINE BIOSYNTHESIS PROTEIN ATIC"/>
    <property type="match status" value="1"/>
</dbReference>
<dbReference type="PANTHER" id="PTHR11692">
    <property type="entry name" value="BIFUNCTIONAL PURINE BIOSYNTHESIS PROTEIN PURH"/>
    <property type="match status" value="1"/>
</dbReference>
<dbReference type="Pfam" id="PF01808">
    <property type="entry name" value="AICARFT_IMPCHas"/>
    <property type="match status" value="1"/>
</dbReference>
<dbReference type="Pfam" id="PF02142">
    <property type="entry name" value="MGS"/>
    <property type="match status" value="1"/>
</dbReference>
<dbReference type="PIRSF" id="PIRSF000414">
    <property type="entry name" value="AICARFT_IMPCHas"/>
    <property type="match status" value="1"/>
</dbReference>
<dbReference type="SMART" id="SM00798">
    <property type="entry name" value="AICARFT_IMPCHas"/>
    <property type="match status" value="1"/>
</dbReference>
<dbReference type="SMART" id="SM00851">
    <property type="entry name" value="MGS"/>
    <property type="match status" value="1"/>
</dbReference>
<dbReference type="SUPFAM" id="SSF53927">
    <property type="entry name" value="Cytidine deaminase-like"/>
    <property type="match status" value="1"/>
</dbReference>
<dbReference type="SUPFAM" id="SSF52335">
    <property type="entry name" value="Methylglyoxal synthase-like"/>
    <property type="match status" value="1"/>
</dbReference>
<dbReference type="PROSITE" id="PS51855">
    <property type="entry name" value="MGS"/>
    <property type="match status" value="1"/>
</dbReference>
<proteinExistence type="inferred from homology"/>
<keyword id="KW-0378">Hydrolase</keyword>
<keyword id="KW-0511">Multifunctional enzyme</keyword>
<keyword id="KW-0658">Purine biosynthesis</keyword>
<keyword id="KW-1185">Reference proteome</keyword>
<keyword id="KW-0808">Transferase</keyword>
<evidence type="ECO:0000255" key="1">
    <source>
        <dbReference type="HAMAP-Rule" id="MF_00139"/>
    </source>
</evidence>
<evidence type="ECO:0000255" key="2">
    <source>
        <dbReference type="PROSITE-ProRule" id="PRU01202"/>
    </source>
</evidence>
<organism>
    <name type="scientific">Fusobacterium nucleatum subsp. nucleatum (strain ATCC 25586 / DSM 15643 / BCRC 10681 / CIP 101130 / JCM 8532 / KCTC 2640 / LMG 13131 / VPI 4355)</name>
    <dbReference type="NCBI Taxonomy" id="190304"/>
    <lineage>
        <taxon>Bacteria</taxon>
        <taxon>Fusobacteriati</taxon>
        <taxon>Fusobacteriota</taxon>
        <taxon>Fusobacteriia</taxon>
        <taxon>Fusobacteriales</taxon>
        <taxon>Fusobacteriaceae</taxon>
        <taxon>Fusobacterium</taxon>
    </lineage>
</organism>